<evidence type="ECO:0000250" key="1"/>
<evidence type="ECO:0000250" key="2">
    <source>
        <dbReference type="UniProtKB" id="P27699"/>
    </source>
</evidence>
<evidence type="ECO:0000250" key="3">
    <source>
        <dbReference type="UniProtKB" id="Q01147"/>
    </source>
</evidence>
<evidence type="ECO:0000255" key="4">
    <source>
        <dbReference type="PROSITE-ProRule" id="PRU00312"/>
    </source>
</evidence>
<evidence type="ECO:0000255" key="5">
    <source>
        <dbReference type="PROSITE-ProRule" id="PRU00978"/>
    </source>
</evidence>
<evidence type="ECO:0000269" key="6">
    <source>
    </source>
</evidence>
<evidence type="ECO:0000269" key="7">
    <source>
    </source>
</evidence>
<evidence type="ECO:0000269" key="8">
    <source>
    </source>
</evidence>
<evidence type="ECO:0000269" key="9">
    <source>
    </source>
</evidence>
<evidence type="ECO:0000269" key="10">
    <source>
    </source>
</evidence>
<evidence type="ECO:0000303" key="11">
    <source>
    </source>
</evidence>
<evidence type="ECO:0000303" key="12">
    <source>
    </source>
</evidence>
<evidence type="ECO:0000303" key="13">
    <source>
    </source>
</evidence>
<evidence type="ECO:0000303" key="14">
    <source>
    </source>
</evidence>
<evidence type="ECO:0000303" key="15">
    <source>
    </source>
</evidence>
<evidence type="ECO:0000303" key="16">
    <source>
    </source>
</evidence>
<evidence type="ECO:0000303" key="17">
    <source>
    </source>
</evidence>
<evidence type="ECO:0000303" key="18">
    <source ref="4"/>
</evidence>
<evidence type="ECO:0000303" key="19">
    <source ref="5"/>
</evidence>
<evidence type="ECO:0000305" key="20"/>
<evidence type="ECO:0000312" key="21">
    <source>
        <dbReference type="HGNC" id="HGNC:2352"/>
    </source>
</evidence>
<evidence type="ECO:0007744" key="22">
    <source>
    </source>
</evidence>
<evidence type="ECO:0007744" key="23">
    <source>
    </source>
</evidence>
<evidence type="ECO:0007744" key="24">
    <source>
    </source>
</evidence>
<dbReference type="EMBL" id="D14825">
    <property type="protein sequence ID" value="BAA03562.1"/>
    <property type="molecule type" value="mRNA"/>
</dbReference>
<dbReference type="EMBL" id="D14826">
    <property type="protein sequence ID" value="BAA03564.1"/>
    <property type="molecule type" value="mRNA"/>
</dbReference>
<dbReference type="EMBL" id="D14826">
    <property type="protein sequence ID" value="BAA03565.1"/>
    <property type="molecule type" value="mRNA"/>
</dbReference>
<dbReference type="EMBL" id="D14826">
    <property type="protein sequence ID" value="BAA03566.1"/>
    <property type="molecule type" value="mRNA"/>
</dbReference>
<dbReference type="EMBL" id="D14826">
    <property type="protein sequence ID" value="BAA03567.1"/>
    <property type="molecule type" value="mRNA"/>
</dbReference>
<dbReference type="EMBL" id="U44836">
    <property type="protein sequence ID" value="AAB03751.1"/>
    <property type="status" value="ALT_SEQ"/>
    <property type="molecule type" value="mRNA"/>
</dbReference>
<dbReference type="EMBL" id="AF069065">
    <property type="protein sequence ID" value="AAC19383.1"/>
    <property type="molecule type" value="mRNA"/>
</dbReference>
<dbReference type="EMBL" id="AY292864">
    <property type="protein sequence ID" value="AAP44115.1"/>
    <property type="molecule type" value="mRNA"/>
</dbReference>
<dbReference type="EMBL" id="AK289379">
    <property type="protein sequence ID" value="BAF82068.1"/>
    <property type="molecule type" value="mRNA"/>
</dbReference>
<dbReference type="EMBL" id="AK290612">
    <property type="protein sequence ID" value="BAF83301.1"/>
    <property type="molecule type" value="mRNA"/>
</dbReference>
<dbReference type="EMBL" id="AK291566">
    <property type="protein sequence ID" value="BAF84255.1"/>
    <property type="molecule type" value="mRNA"/>
</dbReference>
<dbReference type="EMBL" id="AK301906">
    <property type="protein sequence ID" value="BAG63333.1"/>
    <property type="molecule type" value="mRNA"/>
</dbReference>
<dbReference type="EMBL" id="AL117336">
    <property type="status" value="NOT_ANNOTATED_CDS"/>
    <property type="molecule type" value="Genomic_DNA"/>
</dbReference>
<dbReference type="EMBL" id="AL157783">
    <property type="status" value="NOT_ANNOTATED_CDS"/>
    <property type="molecule type" value="Genomic_DNA"/>
</dbReference>
<dbReference type="EMBL" id="CH471072">
    <property type="protein sequence ID" value="EAW85917.1"/>
    <property type="molecule type" value="Genomic_DNA"/>
</dbReference>
<dbReference type="EMBL" id="CH471072">
    <property type="protein sequence ID" value="EAW85918.1"/>
    <property type="molecule type" value="Genomic_DNA"/>
</dbReference>
<dbReference type="EMBL" id="BC017117">
    <property type="protein sequence ID" value="AAH17117.1"/>
    <property type="molecule type" value="mRNA"/>
</dbReference>
<dbReference type="EMBL" id="BC066342">
    <property type="protein sequence ID" value="AAH66342.1"/>
    <property type="molecule type" value="mRNA"/>
</dbReference>
<dbReference type="EMBL" id="BC090051">
    <property type="protein sequence ID" value="AAH90051.1"/>
    <property type="molecule type" value="mRNA"/>
</dbReference>
<dbReference type="EMBL" id="AF213899">
    <property type="protein sequence ID" value="AAF68266.2"/>
    <property type="status" value="ALT_SEQ"/>
    <property type="molecule type" value="Genomic_DNA"/>
</dbReference>
<dbReference type="EMBL" id="AF212158">
    <property type="protein sequence ID" value="AAF68266.2"/>
    <property type="status" value="JOINED"/>
    <property type="molecule type" value="Genomic_DNA"/>
</dbReference>
<dbReference type="EMBL" id="AF213897">
    <property type="protein sequence ID" value="AAF68266.2"/>
    <property type="status" value="JOINED"/>
    <property type="molecule type" value="Genomic_DNA"/>
</dbReference>
<dbReference type="EMBL" id="AF213898">
    <property type="protein sequence ID" value="AAF68266.2"/>
    <property type="status" value="JOINED"/>
    <property type="molecule type" value="Genomic_DNA"/>
</dbReference>
<dbReference type="EMBL" id="AF417234">
    <property type="protein sequence ID" value="AAN32656.1"/>
    <property type="molecule type" value="mRNA"/>
</dbReference>
<dbReference type="EMBL" id="S68271">
    <property type="protein sequence ID" value="AAC60616.2"/>
    <property type="molecule type" value="mRNA"/>
</dbReference>
<dbReference type="EMBL" id="S68134">
    <property type="protein sequence ID" value="AAC60617.2"/>
    <property type="molecule type" value="mRNA"/>
</dbReference>
<dbReference type="EMBL" id="Z15159">
    <property type="protein sequence ID" value="CAA78858.1"/>
    <property type="molecule type" value="mRNA"/>
</dbReference>
<dbReference type="EMBL" id="AF217318">
    <property type="protein sequence ID" value="AAF66158.2"/>
    <property type="molecule type" value="Genomic_DNA"/>
</dbReference>
<dbReference type="EMBL" id="AF214665">
    <property type="protein sequence ID" value="AAF66158.2"/>
    <property type="status" value="JOINED"/>
    <property type="molecule type" value="Genomic_DNA"/>
</dbReference>
<dbReference type="EMBL" id="AF217318">
    <property type="protein sequence ID" value="AAF68682.1"/>
    <property type="molecule type" value="Genomic_DNA"/>
</dbReference>
<dbReference type="EMBL" id="AF214665">
    <property type="protein sequence ID" value="AAF68682.1"/>
    <property type="status" value="JOINED"/>
    <property type="molecule type" value="Genomic_DNA"/>
</dbReference>
<dbReference type="CCDS" id="CCDS31181.1">
    <molecule id="Q03060-32"/>
</dbReference>
<dbReference type="CCDS" id="CCDS53517.1">
    <molecule id="Q03060-10"/>
</dbReference>
<dbReference type="CCDS" id="CCDS53518.1">
    <molecule id="Q03060-9"/>
</dbReference>
<dbReference type="CCDS" id="CCDS53519.1">
    <molecule id="Q03060-11"/>
</dbReference>
<dbReference type="CCDS" id="CCDS53520.1">
    <molecule id="Q03060-27"/>
</dbReference>
<dbReference type="CCDS" id="CCDS53521.1">
    <molecule id="Q03060-23"/>
</dbReference>
<dbReference type="CCDS" id="CCDS58074.1">
    <molecule id="Q03060-22"/>
</dbReference>
<dbReference type="CCDS" id="CCDS58075.1">
    <molecule id="Q03060-28"/>
</dbReference>
<dbReference type="CCDS" id="CCDS58076.1">
    <molecule id="Q03060-29"/>
</dbReference>
<dbReference type="CCDS" id="CCDS7180.1">
    <molecule id="Q03060-16"/>
</dbReference>
<dbReference type="CCDS" id="CCDS7181.1">
    <molecule id="Q03060-31"/>
</dbReference>
<dbReference type="CCDS" id="CCDS7182.1">
    <molecule id="Q03060-26"/>
</dbReference>
<dbReference type="CCDS" id="CCDS7183.1">
    <molecule id="Q03060-30"/>
</dbReference>
<dbReference type="CCDS" id="CCDS7184.1">
    <molecule id="Q03060-25"/>
</dbReference>
<dbReference type="CCDS" id="CCDS7185.1">
    <molecule id="Q03060-12"/>
</dbReference>
<dbReference type="CCDS" id="CCDS7186.1">
    <molecule id="Q03060-7"/>
</dbReference>
<dbReference type="CCDS" id="CCDS7187.1">
    <molecule id="Q03060-8"/>
</dbReference>
<dbReference type="CCDS" id="CCDS7188.1">
    <molecule id="Q03060-24"/>
</dbReference>
<dbReference type="PIR" id="JC2087">
    <property type="entry name" value="JC2087"/>
</dbReference>
<dbReference type="PIR" id="JC6135">
    <property type="entry name" value="JC6135"/>
</dbReference>
<dbReference type="PIR" id="JX0307">
    <property type="entry name" value="JX0307"/>
</dbReference>
<dbReference type="PIR" id="S26685">
    <property type="entry name" value="S26685"/>
</dbReference>
<dbReference type="RefSeq" id="NP_001254491.1">
    <property type="nucleotide sequence ID" value="NM_001267562.1"/>
</dbReference>
<dbReference type="RefSeq" id="NP_001254493.1">
    <molecule id="Q03060-22"/>
    <property type="nucleotide sequence ID" value="NM_001267564.2"/>
</dbReference>
<dbReference type="RefSeq" id="NP_001254496.1">
    <molecule id="Q03060-28"/>
    <property type="nucleotide sequence ID" value="NM_001267567.2"/>
</dbReference>
<dbReference type="RefSeq" id="NP_001254499.1">
    <molecule id="Q03060-29"/>
    <property type="nucleotide sequence ID" value="NM_001267570.2"/>
</dbReference>
<dbReference type="RefSeq" id="NP_001381524.1">
    <molecule id="Q03060-16"/>
    <property type="nucleotide sequence ID" value="NM_001394595.1"/>
</dbReference>
<dbReference type="RefSeq" id="NP_001381542.1">
    <molecule id="Q03060-30"/>
    <property type="nucleotide sequence ID" value="NM_001394613.1"/>
</dbReference>
<dbReference type="RefSeq" id="NP_001872.3">
    <molecule id="Q03060-25"/>
    <property type="nucleotide sequence ID" value="NM_001881.3"/>
</dbReference>
<dbReference type="RefSeq" id="NP_853549.1">
    <molecule id="Q03060-16"/>
    <property type="nucleotide sequence ID" value="NM_181571.3"/>
</dbReference>
<dbReference type="RefSeq" id="NP_874386.1">
    <molecule id="Q03060-8"/>
    <property type="nucleotide sequence ID" value="NM_182717.2"/>
</dbReference>
<dbReference type="RefSeq" id="NP_874387.1">
    <molecule id="Q03060-11"/>
    <property type="nucleotide sequence ID" value="NM_182718.2"/>
</dbReference>
<dbReference type="RefSeq" id="NP_874388.1">
    <molecule id="Q03060-10"/>
    <property type="nucleotide sequence ID" value="NM_182719.2"/>
</dbReference>
<dbReference type="RefSeq" id="NP_874389.1">
    <molecule id="Q03060-9"/>
    <property type="nucleotide sequence ID" value="NM_182720.2"/>
</dbReference>
<dbReference type="RefSeq" id="NP_874390.1">
    <molecule id="Q03060-24"/>
    <property type="nucleotide sequence ID" value="NM_182721.2"/>
</dbReference>
<dbReference type="RefSeq" id="NP_874392.1">
    <molecule id="Q03060-23"/>
    <property type="nucleotide sequence ID" value="NM_182723.2"/>
</dbReference>
<dbReference type="RefSeq" id="NP_874393.1">
    <molecule id="Q03060-27"/>
    <property type="nucleotide sequence ID" value="NM_182724.2"/>
</dbReference>
<dbReference type="RefSeq" id="NP_877570.1">
    <molecule id="Q03060-7"/>
    <property type="nucleotide sequence ID" value="NM_182769.3"/>
</dbReference>
<dbReference type="RefSeq" id="NP_877571.1">
    <property type="nucleotide sequence ID" value="NM_182770.2"/>
</dbReference>
<dbReference type="RefSeq" id="NP_877572.1">
    <molecule id="Q03060-12"/>
    <property type="nucleotide sequence ID" value="NM_182771.2"/>
</dbReference>
<dbReference type="RefSeq" id="NP_877573.1">
    <property type="nucleotide sequence ID" value="NM_182772.1"/>
</dbReference>
<dbReference type="RefSeq" id="NP_898829.1">
    <molecule id="Q03060-31"/>
    <property type="nucleotide sequence ID" value="NM_183011.2"/>
</dbReference>
<dbReference type="RefSeq" id="NP_898830.1">
    <molecule id="Q03060-32"/>
    <property type="nucleotide sequence ID" value="NM_183012.2"/>
</dbReference>
<dbReference type="RefSeq" id="NP_898831.1">
    <molecule id="Q03060-26"/>
    <property type="nucleotide sequence ID" value="NM_183013.3"/>
</dbReference>
<dbReference type="RefSeq" id="NP_898883.1">
    <molecule id="Q03060-30"/>
    <property type="nucleotide sequence ID" value="NM_183060.3"/>
</dbReference>
<dbReference type="RefSeq" id="XP_006717441.1">
    <property type="nucleotide sequence ID" value="XM_006717378.3"/>
</dbReference>
<dbReference type="RefSeq" id="XP_006717442.1">
    <property type="nucleotide sequence ID" value="XM_006717379.3"/>
</dbReference>
<dbReference type="RefSeq" id="XP_006717445.1">
    <molecule id="Q03060-2"/>
    <property type="nucleotide sequence ID" value="XM_006717382.4"/>
</dbReference>
<dbReference type="RefSeq" id="XP_006717446.1">
    <property type="nucleotide sequence ID" value="XM_006717383.3"/>
</dbReference>
<dbReference type="RefSeq" id="XP_011517626.1">
    <molecule id="Q03060-15"/>
    <property type="nucleotide sequence ID" value="XM_011519324.3"/>
</dbReference>
<dbReference type="RefSeq" id="XP_011517627.1">
    <molecule id="Q03060-15"/>
    <property type="nucleotide sequence ID" value="XM_011519325.4"/>
</dbReference>
<dbReference type="RefSeq" id="XP_016871211.1">
    <property type="nucleotide sequence ID" value="XM_017015722.1"/>
</dbReference>
<dbReference type="RefSeq" id="XP_047280583.1">
    <molecule id="Q03060-1"/>
    <property type="nucleotide sequence ID" value="XM_047424627.1"/>
</dbReference>
<dbReference type="RefSeq" id="XP_047280584.1">
    <molecule id="Q03060-6"/>
    <property type="nucleotide sequence ID" value="XM_047424628.1"/>
</dbReference>
<dbReference type="RefSeq" id="XP_054220814.1">
    <molecule id="Q03060-1"/>
    <property type="nucleotide sequence ID" value="XM_054364839.1"/>
</dbReference>
<dbReference type="RefSeq" id="XP_054220815.1">
    <molecule id="Q03060-6"/>
    <property type="nucleotide sequence ID" value="XM_054364840.1"/>
</dbReference>
<dbReference type="RefSeq" id="XP_054220816.1">
    <molecule id="Q03060-15"/>
    <property type="nucleotide sequence ID" value="XM_054364841.1"/>
</dbReference>
<dbReference type="RefSeq" id="XP_054220817.1">
    <molecule id="Q03060-15"/>
    <property type="nucleotide sequence ID" value="XM_054364842.1"/>
</dbReference>
<dbReference type="RefSeq" id="XP_054220823.1">
    <molecule id="Q03060-2"/>
    <property type="nucleotide sequence ID" value="XM_054364848.1"/>
</dbReference>
<dbReference type="SMR" id="Q03060"/>
<dbReference type="BioGRID" id="107780">
    <property type="interactions" value="76"/>
</dbReference>
<dbReference type="FunCoup" id="Q03060">
    <property type="interactions" value="4567"/>
</dbReference>
<dbReference type="IntAct" id="Q03060">
    <property type="interactions" value="33"/>
</dbReference>
<dbReference type="MINT" id="Q03060"/>
<dbReference type="STRING" id="9606.ENSP00000265372"/>
<dbReference type="GlyCosmos" id="Q03060">
    <property type="glycosylation" value="2 sites, 1 glycan"/>
</dbReference>
<dbReference type="iPTMnet" id="Q03060"/>
<dbReference type="PhosphoSitePlus" id="Q03060"/>
<dbReference type="BioMuta" id="CREM"/>
<dbReference type="DMDM" id="259016392"/>
<dbReference type="jPOST" id="Q03060"/>
<dbReference type="MassIVE" id="Q03060"/>
<dbReference type="PeptideAtlas" id="Q03060"/>
<dbReference type="ProteomicsDB" id="12335"/>
<dbReference type="ProteomicsDB" id="19066"/>
<dbReference type="ProteomicsDB" id="1908"/>
<dbReference type="ProteomicsDB" id="20564"/>
<dbReference type="ProteomicsDB" id="58163">
    <molecule id="Q03060-5"/>
</dbReference>
<dbReference type="ProteomicsDB" id="58164">
    <molecule id="Q03060-1"/>
</dbReference>
<dbReference type="ProteomicsDB" id="58165">
    <molecule id="Q03060-10"/>
</dbReference>
<dbReference type="ProteomicsDB" id="58166">
    <molecule id="Q03060-11"/>
</dbReference>
<dbReference type="ProteomicsDB" id="58167">
    <molecule id="Q03060-12"/>
</dbReference>
<dbReference type="ProteomicsDB" id="58168">
    <molecule id="Q03060-13"/>
</dbReference>
<dbReference type="ProteomicsDB" id="58169">
    <molecule id="Q03060-14"/>
</dbReference>
<dbReference type="ProteomicsDB" id="58170">
    <molecule id="Q03060-15"/>
</dbReference>
<dbReference type="ProteomicsDB" id="58171">
    <molecule id="Q03060-16"/>
</dbReference>
<dbReference type="ProteomicsDB" id="58172">
    <molecule id="Q03060-17"/>
</dbReference>
<dbReference type="ProteomicsDB" id="58173">
    <molecule id="Q03060-19"/>
</dbReference>
<dbReference type="ProteomicsDB" id="58174">
    <molecule id="Q03060-2"/>
</dbReference>
<dbReference type="ProteomicsDB" id="58175">
    <molecule id="Q03060-20"/>
</dbReference>
<dbReference type="ProteomicsDB" id="58176">
    <molecule id="Q03060-21"/>
</dbReference>
<dbReference type="ProteomicsDB" id="58177">
    <molecule id="Q03060-22"/>
</dbReference>
<dbReference type="ProteomicsDB" id="58178">
    <molecule id="Q03060-23"/>
</dbReference>
<dbReference type="ProteomicsDB" id="58179">
    <molecule id="Q03060-24"/>
</dbReference>
<dbReference type="ProteomicsDB" id="58180">
    <molecule id="Q03060-25"/>
</dbReference>
<dbReference type="ProteomicsDB" id="58181">
    <molecule id="Q03060-6"/>
</dbReference>
<dbReference type="ProteomicsDB" id="58182">
    <molecule id="Q03060-7"/>
</dbReference>
<dbReference type="ProteomicsDB" id="58183">
    <molecule id="Q03060-8"/>
</dbReference>
<dbReference type="ProteomicsDB" id="58184">
    <molecule id="Q03060-9"/>
</dbReference>
<dbReference type="ProteomicsDB" id="65804"/>
<dbReference type="ProteomicsDB" id="65805"/>
<dbReference type="ProteomicsDB" id="8870"/>
<dbReference type="Pumba" id="Q03060"/>
<dbReference type="Antibodypedia" id="4333">
    <property type="antibodies" value="435 antibodies from 35 providers"/>
</dbReference>
<dbReference type="DNASU" id="1390"/>
<dbReference type="Ensembl" id="ENST00000337656.8">
    <molecule id="Q03060-31"/>
    <property type="protein sequence ID" value="ENSP00000337138.4"/>
    <property type="gene ID" value="ENSG00000095794.21"/>
</dbReference>
<dbReference type="Ensembl" id="ENST00000342105.7">
    <molecule id="Q03060-7"/>
    <property type="protein sequence ID" value="ENSP00000341875.3"/>
    <property type="gene ID" value="ENSG00000095794.21"/>
</dbReference>
<dbReference type="Ensembl" id="ENST00000345491.7">
    <molecule id="Q03060-16"/>
    <property type="protein sequence ID" value="ENSP00000265372.5"/>
    <property type="gene ID" value="ENSG00000095794.21"/>
</dbReference>
<dbReference type="Ensembl" id="ENST00000348787.6">
    <molecule id="Q03060-30"/>
    <property type="protein sequence ID" value="ENSP00000345384.2"/>
    <property type="gene ID" value="ENSG00000095794.21"/>
</dbReference>
<dbReference type="Ensembl" id="ENST00000354759.7">
    <molecule id="Q03060-26"/>
    <property type="protein sequence ID" value="ENSP00000346804.3"/>
    <property type="gene ID" value="ENSG00000095794.21"/>
</dbReference>
<dbReference type="Ensembl" id="ENST00000356917.9">
    <molecule id="Q03060-9"/>
    <property type="protein sequence ID" value="ENSP00000349387.5"/>
    <property type="gene ID" value="ENSG00000095794.21"/>
</dbReference>
<dbReference type="Ensembl" id="ENST00000361599.8">
    <molecule id="Q03060-12"/>
    <property type="protein sequence ID" value="ENSP00000354593.4"/>
    <property type="gene ID" value="ENSG00000095794.21"/>
</dbReference>
<dbReference type="Ensembl" id="ENST00000374726.7">
    <molecule id="Q03060-25"/>
    <property type="protein sequence ID" value="ENSP00000363858.3"/>
    <property type="gene ID" value="ENSG00000095794.21"/>
</dbReference>
<dbReference type="Ensembl" id="ENST00000374734.7">
    <molecule id="Q03060-32"/>
    <property type="protein sequence ID" value="ENSP00000363866.3"/>
    <property type="gene ID" value="ENSG00000095794.21"/>
</dbReference>
<dbReference type="Ensembl" id="ENST00000395887.8">
    <molecule id="Q03060-22"/>
    <property type="protein sequence ID" value="ENSP00000379225.3"/>
    <property type="gene ID" value="ENSG00000095794.21"/>
</dbReference>
<dbReference type="Ensembl" id="ENST00000429130.7">
    <molecule id="Q03060-5"/>
    <property type="protein sequence ID" value="ENSP00000393538.2"/>
    <property type="gene ID" value="ENSG00000095794.21"/>
</dbReference>
<dbReference type="Ensembl" id="ENST00000463314.5">
    <molecule id="Q03060-28"/>
    <property type="protein sequence ID" value="ENSP00000418336.1"/>
    <property type="gene ID" value="ENSG00000095794.21"/>
</dbReference>
<dbReference type="Ensembl" id="ENST00000468236.5">
    <molecule id="Q03060-29"/>
    <property type="protein sequence ID" value="ENSP00000419810.1"/>
    <property type="gene ID" value="ENSG00000095794.21"/>
</dbReference>
<dbReference type="Ensembl" id="ENST00000473940.5">
    <molecule id="Q03060-8"/>
    <property type="protein sequence ID" value="ENSP00000420681.1"/>
    <property type="gene ID" value="ENSG00000095794.21"/>
</dbReference>
<dbReference type="Ensembl" id="ENST00000474931.5">
    <molecule id="Q03060-24"/>
    <property type="protein sequence ID" value="ENSP00000417562.1"/>
    <property type="gene ID" value="ENSG00000095794.21"/>
</dbReference>
<dbReference type="Ensembl" id="ENST00000479070.5">
    <molecule id="Q03060-15"/>
    <property type="protein sequence ID" value="ENSP00000420511.1"/>
    <property type="gene ID" value="ENSG00000095794.21"/>
</dbReference>
<dbReference type="Ensembl" id="ENST00000487132.6">
    <molecule id="Q03060-30"/>
    <property type="protein sequence ID" value="ENSP00000418798.2"/>
    <property type="gene ID" value="ENSG00000095794.21"/>
</dbReference>
<dbReference type="Ensembl" id="ENST00000487763.5">
    <molecule id="Q03060-10"/>
    <property type="protein sequence ID" value="ENSP00000417807.1"/>
    <property type="gene ID" value="ENSG00000095794.21"/>
</dbReference>
<dbReference type="Ensembl" id="ENST00000488328.5">
    <molecule id="Q03060-11"/>
    <property type="protein sequence ID" value="ENSP00000417460.1"/>
    <property type="gene ID" value="ENSG00000095794.21"/>
</dbReference>
<dbReference type="Ensembl" id="ENST00000488741.5">
    <molecule id="Q03060-23"/>
    <property type="protein sequence ID" value="ENSP00000419075.1"/>
    <property type="gene ID" value="ENSG00000095794.21"/>
</dbReference>
<dbReference type="Ensembl" id="ENST00000489321.5">
    <molecule id="Q03060-25"/>
    <property type="protein sequence ID" value="ENSP00000419924.1"/>
    <property type="gene ID" value="ENSG00000095794.21"/>
</dbReference>
<dbReference type="Ensembl" id="ENST00000490511.1">
    <molecule id="Q03060-27"/>
    <property type="protein sequence ID" value="ENSP00000417327.1"/>
    <property type="gene ID" value="ENSG00000095794.21"/>
</dbReference>
<dbReference type="Ensembl" id="ENST00000685392.1">
    <molecule id="Q03060-31"/>
    <property type="protein sequence ID" value="ENSP00000509489.1"/>
    <property type="gene ID" value="ENSG00000095794.21"/>
</dbReference>
<dbReference type="Ensembl" id="ENST00000686585.1">
    <molecule id="Q03060-16"/>
    <property type="protein sequence ID" value="ENSP00000510546.1"/>
    <property type="gene ID" value="ENSG00000095794.21"/>
</dbReference>
<dbReference type="GeneID" id="1390"/>
<dbReference type="KEGG" id="hsa:1390"/>
<dbReference type="MANE-Select" id="ENST00000685392.1">
    <molecule id="Q03060-31"/>
    <property type="protein sequence ID" value="ENSP00000509489.1"/>
    <property type="RefSeq nucleotide sequence ID" value="NM_183011.2"/>
    <property type="RefSeq protein sequence ID" value="NP_898829.1"/>
</dbReference>
<dbReference type="UCSC" id="uc001ixx.4">
    <molecule id="Q03060-5"/>
    <property type="organism name" value="human"/>
</dbReference>
<dbReference type="AGR" id="HGNC:2352"/>
<dbReference type="CTD" id="1390"/>
<dbReference type="DisGeNET" id="1390"/>
<dbReference type="GeneCards" id="CREM"/>
<dbReference type="HGNC" id="HGNC:2352">
    <property type="gene designation" value="CREM"/>
</dbReference>
<dbReference type="HPA" id="ENSG00000095794">
    <property type="expression patterns" value="Tissue enhanced (testis)"/>
</dbReference>
<dbReference type="MIM" id="123812">
    <property type="type" value="gene"/>
</dbReference>
<dbReference type="neXtProt" id="NX_Q03060"/>
<dbReference type="OpenTargets" id="ENSG00000095794"/>
<dbReference type="PharmGKB" id="PA26871"/>
<dbReference type="VEuPathDB" id="HostDB:ENSG00000095794"/>
<dbReference type="GeneTree" id="ENSGT00940000156952"/>
<dbReference type="HOGENOM" id="CLU_142602_0_0_1"/>
<dbReference type="InParanoid" id="Q03060"/>
<dbReference type="OMA" id="HEKTTER"/>
<dbReference type="OrthoDB" id="5970722at2759"/>
<dbReference type="PAN-GO" id="Q03060">
    <property type="GO annotations" value="4 GO annotations based on evolutionary models"/>
</dbReference>
<dbReference type="PhylomeDB" id="Q03060"/>
<dbReference type="TreeFam" id="TF106464"/>
<dbReference type="PathwayCommons" id="Q03060"/>
<dbReference type="Reactome" id="R-HSA-400253">
    <molecule id="Q03060-6"/>
    <property type="pathway name" value="Circadian Clock"/>
</dbReference>
<dbReference type="SignaLink" id="Q03060"/>
<dbReference type="SIGNOR" id="Q03060"/>
<dbReference type="BioGRID-ORCS" id="1390">
    <property type="hits" value="15 hits in 1175 CRISPR screens"/>
</dbReference>
<dbReference type="ChiTaRS" id="CREM">
    <property type="organism name" value="human"/>
</dbReference>
<dbReference type="GeneWiki" id="CAMP_responsive_element_modulator"/>
<dbReference type="GenomeRNAi" id="1390"/>
<dbReference type="Pharos" id="Q03060">
    <property type="development level" value="Tbio"/>
</dbReference>
<dbReference type="PRO" id="PR:Q03060"/>
<dbReference type="Proteomes" id="UP000005640">
    <property type="component" value="Chromosome 10"/>
</dbReference>
<dbReference type="RNAct" id="Q03060">
    <property type="molecule type" value="protein"/>
</dbReference>
<dbReference type="Bgee" id="ENSG00000095794">
    <property type="expression patterns" value="Expressed in left testis and 198 other cell types or tissues"/>
</dbReference>
<dbReference type="ExpressionAtlas" id="Q03060">
    <property type="expression patterns" value="baseline and differential"/>
</dbReference>
<dbReference type="GO" id="GO:1990589">
    <property type="term" value="C:ATF4-CREB1 transcription factor complex"/>
    <property type="evidence" value="ECO:0000318"/>
    <property type="project" value="GO_Central"/>
</dbReference>
<dbReference type="GO" id="GO:0000785">
    <property type="term" value="C:chromatin"/>
    <property type="evidence" value="ECO:0000247"/>
    <property type="project" value="NTNU_SB"/>
</dbReference>
<dbReference type="GO" id="GO:0005737">
    <property type="term" value="C:cytoplasm"/>
    <property type="evidence" value="ECO:0007669"/>
    <property type="project" value="UniProtKB-SubCell"/>
</dbReference>
<dbReference type="GO" id="GO:0016020">
    <property type="term" value="C:membrane"/>
    <property type="evidence" value="ECO:0007669"/>
    <property type="project" value="GOC"/>
</dbReference>
<dbReference type="GO" id="GO:0005634">
    <property type="term" value="C:nucleus"/>
    <property type="evidence" value="ECO:0000304"/>
    <property type="project" value="ProtInc"/>
</dbReference>
<dbReference type="GO" id="GO:0008140">
    <property type="term" value="F:cAMP response element binding protein binding"/>
    <property type="evidence" value="ECO:0000303"/>
    <property type="project" value="UniProtKB"/>
</dbReference>
<dbReference type="GO" id="GO:0003677">
    <property type="term" value="F:DNA binding"/>
    <property type="evidence" value="ECO:0000303"/>
    <property type="project" value="UniProtKB"/>
</dbReference>
<dbReference type="GO" id="GO:0000981">
    <property type="term" value="F:DNA-binding transcription factor activity, RNA polymerase II-specific"/>
    <property type="evidence" value="ECO:0000247"/>
    <property type="project" value="NTNU_SB"/>
</dbReference>
<dbReference type="GO" id="GO:0001227">
    <property type="term" value="F:DNA-binding transcription repressor activity, RNA polymerase II-specific"/>
    <property type="evidence" value="ECO:0000315"/>
    <property type="project" value="NTNU_SB"/>
</dbReference>
<dbReference type="GO" id="GO:0000978">
    <property type="term" value="F:RNA polymerase II cis-regulatory region sequence-specific DNA binding"/>
    <property type="evidence" value="ECO:0000318"/>
    <property type="project" value="GO_Central"/>
</dbReference>
<dbReference type="GO" id="GO:0000977">
    <property type="term" value="F:RNA polymerase II transcription regulatory region sequence-specific DNA binding"/>
    <property type="evidence" value="ECO:0000314"/>
    <property type="project" value="NTNU_SB"/>
</dbReference>
<dbReference type="GO" id="GO:1990837">
    <property type="term" value="F:sequence-specific double-stranded DNA binding"/>
    <property type="evidence" value="ECO:0000314"/>
    <property type="project" value="ARUK-UCL"/>
</dbReference>
<dbReference type="GO" id="GO:0030154">
    <property type="term" value="P:cell differentiation"/>
    <property type="evidence" value="ECO:0007669"/>
    <property type="project" value="UniProtKB-KW"/>
</dbReference>
<dbReference type="GO" id="GO:0006687">
    <property type="term" value="P:glycosphingolipid metabolic process"/>
    <property type="evidence" value="ECO:0007669"/>
    <property type="project" value="Ensembl"/>
</dbReference>
<dbReference type="GO" id="GO:0000122">
    <property type="term" value="P:negative regulation of transcription by RNA polymerase II"/>
    <property type="evidence" value="ECO:0000315"/>
    <property type="project" value="NTNU_SB"/>
</dbReference>
<dbReference type="GO" id="GO:0045944">
    <property type="term" value="P:positive regulation of transcription by RNA polymerase II"/>
    <property type="evidence" value="ECO:0007669"/>
    <property type="project" value="Ensembl"/>
</dbReference>
<dbReference type="GO" id="GO:0006355">
    <property type="term" value="P:regulation of DNA-templated transcription"/>
    <property type="evidence" value="ECO:0000314"/>
    <property type="project" value="UniProtKB"/>
</dbReference>
<dbReference type="GO" id="GO:0006357">
    <property type="term" value="P:regulation of transcription by RNA polymerase II"/>
    <property type="evidence" value="ECO:0000318"/>
    <property type="project" value="GO_Central"/>
</dbReference>
<dbReference type="GO" id="GO:0048511">
    <property type="term" value="P:rhythmic process"/>
    <property type="evidence" value="ECO:0007669"/>
    <property type="project" value="UniProtKB-KW"/>
</dbReference>
<dbReference type="GO" id="GO:0007165">
    <property type="term" value="P:signal transduction"/>
    <property type="evidence" value="ECO:0000304"/>
    <property type="project" value="ProtInc"/>
</dbReference>
<dbReference type="GO" id="GO:0007283">
    <property type="term" value="P:spermatogenesis"/>
    <property type="evidence" value="ECO:0007669"/>
    <property type="project" value="UniProtKB-KW"/>
</dbReference>
<dbReference type="CDD" id="cd14690">
    <property type="entry name" value="bZIP_CREB1"/>
    <property type="match status" value="1"/>
</dbReference>
<dbReference type="FunFam" id="1.20.5.170:FF:000003">
    <property type="entry name" value="cAMP-responsive element modulator isoform X2"/>
    <property type="match status" value="1"/>
</dbReference>
<dbReference type="Gene3D" id="1.20.5.170">
    <property type="match status" value="1"/>
</dbReference>
<dbReference type="InterPro" id="IPR004827">
    <property type="entry name" value="bZIP"/>
</dbReference>
<dbReference type="InterPro" id="IPR046347">
    <property type="entry name" value="bZIP_sf"/>
</dbReference>
<dbReference type="InterPro" id="IPR003102">
    <property type="entry name" value="CREB1-like_pKID"/>
</dbReference>
<dbReference type="InterPro" id="IPR001630">
    <property type="entry name" value="Leuzip_CREB"/>
</dbReference>
<dbReference type="PANTHER" id="PTHR45879:SF4">
    <property type="entry name" value="CAMP-RESPONSIVE ELEMENT MODULATOR"/>
    <property type="match status" value="1"/>
</dbReference>
<dbReference type="PANTHER" id="PTHR45879">
    <property type="entry name" value="CYCLIC AMP RESPONSE ELEMENT-BINDING PROTEIN B"/>
    <property type="match status" value="1"/>
</dbReference>
<dbReference type="Pfam" id="PF00170">
    <property type="entry name" value="bZIP_1"/>
    <property type="match status" value="1"/>
</dbReference>
<dbReference type="Pfam" id="PF02173">
    <property type="entry name" value="pKID"/>
    <property type="match status" value="1"/>
</dbReference>
<dbReference type="PRINTS" id="PR00041">
    <property type="entry name" value="LEUZIPPRCREB"/>
</dbReference>
<dbReference type="SMART" id="SM00338">
    <property type="entry name" value="BRLZ"/>
    <property type="match status" value="1"/>
</dbReference>
<dbReference type="SUPFAM" id="SSF57959">
    <property type="entry name" value="Leucine zipper domain"/>
    <property type="match status" value="1"/>
</dbReference>
<dbReference type="PROSITE" id="PS50217">
    <property type="entry name" value="BZIP"/>
    <property type="match status" value="1"/>
</dbReference>
<dbReference type="PROSITE" id="PS00036">
    <property type="entry name" value="BZIP_BASIC"/>
    <property type="match status" value="1"/>
</dbReference>
<dbReference type="PROSITE" id="PS50953">
    <property type="entry name" value="KID"/>
    <property type="match status" value="1"/>
</dbReference>
<organism>
    <name type="scientific">Homo sapiens</name>
    <name type="common">Human</name>
    <dbReference type="NCBI Taxonomy" id="9606"/>
    <lineage>
        <taxon>Eukaryota</taxon>
        <taxon>Metazoa</taxon>
        <taxon>Chordata</taxon>
        <taxon>Craniata</taxon>
        <taxon>Vertebrata</taxon>
        <taxon>Euteleostomi</taxon>
        <taxon>Mammalia</taxon>
        <taxon>Eutheria</taxon>
        <taxon>Euarchontoglires</taxon>
        <taxon>Primates</taxon>
        <taxon>Haplorrhini</taxon>
        <taxon>Catarrhini</taxon>
        <taxon>Hominidae</taxon>
        <taxon>Homo</taxon>
    </lineage>
</organism>
<feature type="chain" id="PRO_0000076607" description="cAMP-responsive element modulator">
    <location>
        <begin position="1"/>
        <end position="345"/>
    </location>
</feature>
<feature type="domain" description="KID" evidence="4">
    <location>
        <begin position="88"/>
        <end position="147"/>
    </location>
</feature>
<feature type="domain" description="bZIP" evidence="5">
    <location>
        <begin position="286"/>
        <end position="345"/>
    </location>
</feature>
<feature type="region of interest" description="Basic motif" evidence="5">
    <location>
        <begin position="287"/>
        <end position="312"/>
    </location>
</feature>
<feature type="region of interest" description="Leucine-zipper" evidence="5">
    <location>
        <begin position="314"/>
        <end position="335"/>
    </location>
</feature>
<feature type="modified residue" description="Phosphoserine" evidence="2">
    <location>
        <position position="102"/>
    </location>
</feature>
<feature type="modified residue" description="Phosphoserine" evidence="24">
    <location>
        <position position="129"/>
    </location>
</feature>
<feature type="modified residue" description="Phosphoserine" evidence="22 23">
    <location>
        <position position="271"/>
    </location>
</feature>
<feature type="modified residue" description="Phosphoserine" evidence="22">
    <location>
        <position position="274"/>
    </location>
</feature>
<feature type="modified residue" description="Phosphoserine" evidence="22 23">
    <location>
        <position position="277"/>
    </location>
</feature>
<feature type="splice variant" id="VSP_059697" description="In isoform 21 and isoform 24." evidence="13">
    <original>MTMETVESQHDGSITASLTESKSAHVQTQTGQNSIPALAQVSVAGSGTRRGSPAVTLVQLPSGQTIHVQGVIQTPQPWVIQSSEIHTVQVAAIAETDESAESEGVIDSHKRREILSRRPSYRKILNELSSDVPGVPKIEEERSEEEGTPPSIATMAVPTSIYQTSTGQYIAIAQGGTIQISNPGSDGVQGLQALTMTNSGAPPPGATIVQYAAQSADGTQQFFVPGSQVVVQDEETELAPSHMA</original>
    <variation>MNRTQELSGQLS</variation>
    <location>
        <begin position="1"/>
        <end position="244"/>
    </location>
</feature>
<feature type="splice variant" id="VSP_059698" description="In isoform 7 and isoform 9." evidence="16">
    <original>MTMETVESQHDGSITASLTESKSAHVQTQTGQNSIPALAQVSVAGSGTRRGSPAVTLVQLPSGQTIHVQGVIQTPQPWVIQSSEIHTVQVAAIAETDESAESEGVIDSHKRREILSRRPSYRKILNELSSDVPGVPKIEEERSEEEGTPPSIATMAVPTSIYQTSTGQYIAIAQGGTIQISNPGSDGVQGLQALTMTNSGAPPPGATIVQYAAQSADGTQQFFVPGSQVVVQDEETELAPSHMA</original>
    <variation>MAVTGDDT</variation>
    <location>
        <begin position="1"/>
        <end position="244"/>
    </location>
</feature>
<feature type="splice variant" id="VSP_059699" description="In isoform 20." evidence="13">
    <location>
        <begin position="1"/>
        <end position="242"/>
    </location>
</feature>
<feature type="splice variant" id="VSP_059700" description="In isoform 26.">
    <original>MTMETVESQHDGSITASLTESKSAHVQTQTGQNSIPALAQVSVAGSGTRRGSPAVTLVQLPSGQTIHVQGVIQTPQPWVIQSSEIHTVQVAAIAETDESAESEGVIDSHKRREILSRRPSYRKILNELSSDVPGVPKIEEERSEEEGTPPSIATMAVPTSIYQTSTGQYIAIAQGGTIQISNPGSDGVQGLQALTMTNSGAPPPGATIVQYAAQSADGTQQFFVPGSQVVVQ</original>
    <variation>MNRTQELSGQLS</variation>
    <location>
        <begin position="1"/>
        <end position="232"/>
    </location>
</feature>
<feature type="splice variant" id="VSP_059701" description="In isoform 6 and isoform 8." evidence="16 17 18">
    <original>MTMETVESQHDGSITASLTESKSAHVQTQTGQNSIPALAQVSVAGSGTRRGSPAVTLVQLPSGQTIHVQGVIQTPQPWVIQSSEIHTVQVAAIAETDESAESEGVIDSHKRREILSRRPSYRKILNELSSDVPGVPKIEEERSEEEGTPPSIATMAVPTSIYQTSTGQYIAIAQGGTIQISNPGSDGVQGLQALTMTNSGAPPPGATIVQYAAQSADGTQQFFVPGSQVVVQ</original>
    <variation>MAVTGDDT</variation>
    <location>
        <begin position="1"/>
        <end position="232"/>
    </location>
</feature>
<feature type="splice variant" id="VSP_059702" description="In isoform 25.">
    <location>
        <begin position="1"/>
        <end position="195"/>
    </location>
</feature>
<feature type="splice variant" id="VSP_059703" description="In isoform 10, isoform 11 and isoform 19." evidence="11">
    <original>MTMETVESQHDGSITASLTESKSAHVQTQTGQNSIPALAQVSVAGSGTRRGSPAVTLVQLPSGQTIHVQGVIQTPQPWVIQSSEIHTVQ</original>
    <variation>MWWHQHNLCFRRPIEEDYSSGDVEEK</variation>
    <location>
        <begin position="1"/>
        <end position="89"/>
    </location>
</feature>
<feature type="splice variant" id="VSP_059704" description="In isoform 5 and isoform 12.">
    <original>MTMETVESQHDGSITASLTESKSAHVQTQTGQNSIPALAQVSVAGSGTRRGSPAVTLVQLPSGQTIHVQGVIQTPQPWVIQSSEIHTVQ</original>
    <variation>M</variation>
    <location>
        <begin position="1"/>
        <end position="89"/>
    </location>
</feature>
<feature type="splice variant" id="VSP_059705" description="In isoform 2, isoform 3, isoform 4, isoform 13, isoform 14, isoform 15, isoform 16, isoform 17, isoform 18, isoform 23, isoform 28 and isoform 29." evidence="12 15 16">
    <original>M</original>
    <variation>MSKCARKKYIKTNPRQM</variation>
    <location>
        <position position="1"/>
    </location>
</feature>
<feature type="splice variant" id="VSP_059706" description="In isoform 16.">
    <location>
        <begin position="42"/>
        <end position="232"/>
    </location>
</feature>
<feature type="splice variant" id="VSP_059707" description="In isoform 15.">
    <location>
        <begin position="42"/>
        <end position="169"/>
    </location>
</feature>
<feature type="splice variant" id="VSP_059708" description="In isoform 4, isoform 13, isoform 14, isoform 22, isoform 23, isoform 27, isoform 28 and isoform 29." evidence="12 14 16">
    <location>
        <begin position="42"/>
        <end position="90"/>
    </location>
</feature>
<feature type="splice variant" id="VSP_059709" description="In isoform 4, isoform 27 and isoform 29.">
    <original>IAIAQGGTIQISNPGSDGVQGLQALTMTNSGAPPPGATIVQYAAQSADGTQQFFVPGSQVVVQDEETELAPSHMAA</original>
    <variation>T</variation>
    <location>
        <begin position="170"/>
        <end position="245"/>
    </location>
</feature>
<feature type="splice variant" id="VSP_059710" description="In isoform 17 and isoform 18.">
    <location>
        <begin position="170"/>
        <end position="244"/>
    </location>
</feature>
<feature type="splice variant" id="VSP_059711" description="In isoform 23." evidence="16">
    <original>IAIAQGGTIQISNPGSDGVQGLQALTMTNSGAPPPGATIVQYAAQSADGTQQFFVPGSQVVVQD</original>
    <variation>N</variation>
    <location>
        <begin position="170"/>
        <end position="233"/>
    </location>
</feature>
<feature type="splice variant" id="VSP_059712" description="In isoform 11 and isoform 12." evidence="11">
    <location>
        <begin position="170"/>
        <end position="232"/>
    </location>
</feature>
<feature type="splice variant" id="VSP_059713" description="In isoform 22." evidence="14">
    <original>IAIAQGGTIQISNPGSD</original>
    <variation>SMYAAIRYDTVLALSLL</variation>
    <location>
        <begin position="170"/>
        <end position="186"/>
    </location>
</feature>
<feature type="splice variant" id="VSP_059714" description="In isoform 22." evidence="14">
    <location>
        <begin position="187"/>
        <end position="345"/>
    </location>
</feature>
<feature type="splice variant" id="VSP_059715" description="In isoform 2, isoform 3, isoform 5, isoform 10, isoform 14, isoform 15, isoform 25 and isoform 28." evidence="11 13 14 15 19">
    <location>
        <begin position="233"/>
        <end position="244"/>
    </location>
</feature>
<feature type="splice variant" id="VSP_059716" description="In isoform 12 and isoform 11." evidence="12">
    <original>A</original>
    <variation>T</variation>
    <location>
        <position position="245"/>
    </location>
</feature>
<feature type="splice variant" id="VSP_059717" description="In isoform 3, isoform 6, isoform 7, isoform 18, isoform 20, isoform 21, isoform 23, isoform 28 and isoform 29." evidence="13 15 16 18">
    <original>KECRRRKKEYVKCLESRVAVLEVQNKKLIEELETLKDICSPKTDY</original>
    <variation>RECRRKKKEYVKCLENRVAVLENQNKTLIEELKALKDLYCHKVE</variation>
    <location>
        <begin position="301"/>
        <end position="345"/>
    </location>
</feature>
<feature type="sequence variant" id="VAR_055561" description="In dbSNP:rs1804604." evidence="10">
    <original>Q</original>
    <variation>R</variation>
    <location>
        <position position="254"/>
    </location>
</feature>
<feature type="sequence conflict" description="In Ref. 11; AAC60616/AAC60617." evidence="20" ref="11">
    <original>N</original>
    <variation>I</variation>
    <location>
        <position position="33"/>
    </location>
</feature>
<feature type="sequence conflict" description="In Ref. 1; CAA78858." evidence="20" ref="1">
    <original>A</original>
    <variation>R</variation>
    <location>
        <position position="39"/>
    </location>
</feature>
<feature type="sequence conflict" description="In Ref. 11; AAC60616/AAC60617." evidence="20" ref="11">
    <original>VSVAG</original>
    <variation>CSELR</variation>
    <location>
        <begin position="41"/>
        <end position="45"/>
    </location>
</feature>
<feature type="sequence conflict" description="In Ref. 2; BAA03562 and 4; BAA03564/BAA03565/BAA03566/BAA03567." evidence="20" ref="2 4">
    <original>H</original>
    <variation>R</variation>
    <location>
        <position position="276"/>
    </location>
</feature>
<feature type="sequence conflict" description="In Ref. 4; AAC19383." evidence="20" ref="4">
    <original>D</original>
    <variation>E</variation>
    <location sequence="Q03060-8">
        <position position="7"/>
    </location>
</feature>
<feature type="sequence conflict" description="In Ref. 4; AAC19383." evidence="20" ref="4">
    <original>K</original>
    <variation>R</variation>
    <location sequence="Q03060-8">
        <position position="112"/>
    </location>
</feature>
<feature type="sequence conflict" description="In Ref. 3; AAB03751." evidence="20" ref="3">
    <original>D</original>
    <variation>E</variation>
    <location sequence="Q03060-10">
        <position position="7"/>
    </location>
</feature>
<name>CREM_HUMAN</name>
<protein>
    <recommendedName>
        <fullName evidence="20">cAMP-responsive element modulator</fullName>
    </recommendedName>
    <alternativeName>
        <fullName>Inducible cAMP early repressor</fullName>
        <shortName>ICER</shortName>
    </alternativeName>
</protein>
<gene>
    <name evidence="21" type="primary">CREM</name>
</gene>
<reference key="1">
    <citation type="journal article" date="1993" name="Cell Growth Differ.">
        <title>Human CREM gene: evolutionary conservation, chromosomal localization, and inducibility of the transcript.</title>
        <authorList>
            <person name="Masquilier D."/>
            <person name="Foulkes N.S."/>
            <person name="Mattei M.-G."/>
            <person name="Sassone-Corsi P."/>
        </authorList>
    </citation>
    <scope>NUCLEOTIDE SEQUENCE [MRNA] (ISOFORMS 2 AND 3)</scope>
</reference>
<reference key="2">
    <citation type="journal article" date="1994" name="J. Biochem.">
        <title>Novel isoforms of human cyclic AMP-responsive element modulator (hCREM) mRNA.</title>
        <authorList>
            <person name="Fujimoto T."/>
            <person name="Fujisawa J."/>
            <person name="Yoshida M."/>
        </authorList>
    </citation>
    <scope>NUCLEOTIDE SEQUENCE [MRNA] (ISOFORMS 6; 7; 8; 9 AND 23)</scope>
</reference>
<reference key="3">
    <citation type="journal article" date="1996" name="Proc. Natl. Acad. Sci. U.S.A.">
        <title>cAMP inducibility of transcriptional repressor ICER in developing and mature human T lymphocytes.</title>
        <authorList>
            <person name="Bodor J."/>
            <person name="Spetz A.L."/>
            <person name="Strominger J.L."/>
            <person name="Habener J.F."/>
        </authorList>
    </citation>
    <scope>NUCLEOTIDE SEQUENCE [MRNA] (ISOFORM 8)</scope>
    <scope>ALTERNATIVE SPLICING (ISOFORMS 6; 7 AND 9)</scope>
    <scope>VARIANT ARG-254</scope>
</reference>
<reference key="4">
    <citation type="submission" date="1998-05" db="EMBL/GenBank/DDBJ databases">
        <title>Human ICER1, a predicted alternative splice form of CREM, is evident in JEG-3 cells.</title>
        <authorList>
            <person name="Brodie C.R."/>
            <person name="Boland L.M."/>
            <person name="Orr H.T."/>
        </authorList>
    </citation>
    <scope>NUCLEOTIDE SEQUENCE [MRNA] (ISOFORM 6)</scope>
</reference>
<reference key="5">
    <citation type="submission" date="2003-05" db="EMBL/GenBank/DDBJ databases">
        <title>The function of an isoform of hCREM gene in testis development.</title>
        <authorList>
            <person name="Lu L."/>
            <person name="Huang X.Y."/>
            <person name="Xu M."/>
            <person name="Xu Z.Y."/>
            <person name="Li J.M."/>
            <person name="Zhou Z.M."/>
            <person name="Sha J.H."/>
        </authorList>
    </citation>
    <scope>NUCLEOTIDE SEQUENCE [MRNA] (ISOFORM 5)</scope>
    <source>
        <tissue>Testis</tissue>
    </source>
</reference>
<reference key="6">
    <citation type="journal article" date="2004" name="Nat. Genet.">
        <title>Complete sequencing and characterization of 21,243 full-length human cDNAs.</title>
        <authorList>
            <person name="Ota T."/>
            <person name="Suzuki Y."/>
            <person name="Nishikawa T."/>
            <person name="Otsuki T."/>
            <person name="Sugiyama T."/>
            <person name="Irie R."/>
            <person name="Wakamatsu A."/>
            <person name="Hayashi K."/>
            <person name="Sato H."/>
            <person name="Nagai K."/>
            <person name="Kimura K."/>
            <person name="Makita H."/>
            <person name="Sekine M."/>
            <person name="Obayashi M."/>
            <person name="Nishi T."/>
            <person name="Shibahara T."/>
            <person name="Tanaka T."/>
            <person name="Ishii S."/>
            <person name="Yamamoto J."/>
            <person name="Saito K."/>
            <person name="Kawai Y."/>
            <person name="Isono Y."/>
            <person name="Nakamura Y."/>
            <person name="Nagahari K."/>
            <person name="Murakami K."/>
            <person name="Yasuda T."/>
            <person name="Iwayanagi T."/>
            <person name="Wagatsuma M."/>
            <person name="Shiratori A."/>
            <person name="Sudo H."/>
            <person name="Hosoiri T."/>
            <person name="Kaku Y."/>
            <person name="Kodaira H."/>
            <person name="Kondo H."/>
            <person name="Sugawara M."/>
            <person name="Takahashi M."/>
            <person name="Kanda K."/>
            <person name="Yokoi T."/>
            <person name="Furuya T."/>
            <person name="Kikkawa E."/>
            <person name="Omura Y."/>
            <person name="Abe K."/>
            <person name="Kamihara K."/>
            <person name="Katsuta N."/>
            <person name="Sato K."/>
            <person name="Tanikawa M."/>
            <person name="Yamazaki M."/>
            <person name="Ninomiya K."/>
            <person name="Ishibashi T."/>
            <person name="Yamashita H."/>
            <person name="Murakawa K."/>
            <person name="Fujimori K."/>
            <person name="Tanai H."/>
            <person name="Kimata M."/>
            <person name="Watanabe M."/>
            <person name="Hiraoka S."/>
            <person name="Chiba Y."/>
            <person name="Ishida S."/>
            <person name="Ono Y."/>
            <person name="Takiguchi S."/>
            <person name="Watanabe S."/>
            <person name="Yosida M."/>
            <person name="Hotuta T."/>
            <person name="Kusano J."/>
            <person name="Kanehori K."/>
            <person name="Takahashi-Fujii A."/>
            <person name="Hara H."/>
            <person name="Tanase T.-O."/>
            <person name="Nomura Y."/>
            <person name="Togiya S."/>
            <person name="Komai F."/>
            <person name="Hara R."/>
            <person name="Takeuchi K."/>
            <person name="Arita M."/>
            <person name="Imose N."/>
            <person name="Musashino K."/>
            <person name="Yuuki H."/>
            <person name="Oshima A."/>
            <person name="Sasaki N."/>
            <person name="Aotsuka S."/>
            <person name="Yoshikawa Y."/>
            <person name="Matsunawa H."/>
            <person name="Ichihara T."/>
            <person name="Shiohata N."/>
            <person name="Sano S."/>
            <person name="Moriya S."/>
            <person name="Momiyama H."/>
            <person name="Satoh N."/>
            <person name="Takami S."/>
            <person name="Terashima Y."/>
            <person name="Suzuki O."/>
            <person name="Nakagawa S."/>
            <person name="Senoh A."/>
            <person name="Mizoguchi H."/>
            <person name="Goto Y."/>
            <person name="Shimizu F."/>
            <person name="Wakebe H."/>
            <person name="Hishigaki H."/>
            <person name="Watanabe T."/>
            <person name="Sugiyama A."/>
            <person name="Takemoto M."/>
            <person name="Kawakami B."/>
            <person name="Yamazaki M."/>
            <person name="Watanabe K."/>
            <person name="Kumagai A."/>
            <person name="Itakura S."/>
            <person name="Fukuzumi Y."/>
            <person name="Fujimori Y."/>
            <person name="Komiyama M."/>
            <person name="Tashiro H."/>
            <person name="Tanigami A."/>
            <person name="Fujiwara T."/>
            <person name="Ono T."/>
            <person name="Yamada K."/>
            <person name="Fujii Y."/>
            <person name="Ozaki K."/>
            <person name="Hirao M."/>
            <person name="Ohmori Y."/>
            <person name="Kawabata A."/>
            <person name="Hikiji T."/>
            <person name="Kobatake N."/>
            <person name="Inagaki H."/>
            <person name="Ikema Y."/>
            <person name="Okamoto S."/>
            <person name="Okitani R."/>
            <person name="Kawakami T."/>
            <person name="Noguchi S."/>
            <person name="Itoh T."/>
            <person name="Shigeta K."/>
            <person name="Senba T."/>
            <person name="Matsumura K."/>
            <person name="Nakajima Y."/>
            <person name="Mizuno T."/>
            <person name="Morinaga M."/>
            <person name="Sasaki M."/>
            <person name="Togashi T."/>
            <person name="Oyama M."/>
            <person name="Hata H."/>
            <person name="Watanabe M."/>
            <person name="Komatsu T."/>
            <person name="Mizushima-Sugano J."/>
            <person name="Satoh T."/>
            <person name="Shirai Y."/>
            <person name="Takahashi Y."/>
            <person name="Nakagawa K."/>
            <person name="Okumura K."/>
            <person name="Nagase T."/>
            <person name="Nomura N."/>
            <person name="Kikuchi H."/>
            <person name="Masuho Y."/>
            <person name="Yamashita R."/>
            <person name="Nakai K."/>
            <person name="Yada T."/>
            <person name="Nakamura Y."/>
            <person name="Ohara O."/>
            <person name="Isogai T."/>
            <person name="Sugano S."/>
        </authorList>
    </citation>
    <scope>NUCLEOTIDE SEQUENCE [LARGE SCALE MRNA] (ISOFORMS 5; 7; 20 AND 21)</scope>
    <source>
        <tissue>Adrenal gland</tissue>
        <tissue>Heart</tissue>
        <tissue>Placenta</tissue>
        <tissue>Testis</tissue>
    </source>
</reference>
<reference key="7">
    <citation type="journal article" date="2004" name="Nature">
        <title>The DNA sequence and comparative analysis of human chromosome 10.</title>
        <authorList>
            <person name="Deloukas P."/>
            <person name="Earthrowl M.E."/>
            <person name="Grafham D.V."/>
            <person name="Rubenfield M."/>
            <person name="French L."/>
            <person name="Steward C.A."/>
            <person name="Sims S.K."/>
            <person name="Jones M.C."/>
            <person name="Searle S."/>
            <person name="Scott C."/>
            <person name="Howe K."/>
            <person name="Hunt S.E."/>
            <person name="Andrews T.D."/>
            <person name="Gilbert J.G.R."/>
            <person name="Swarbreck D."/>
            <person name="Ashurst J.L."/>
            <person name="Taylor A."/>
            <person name="Battles J."/>
            <person name="Bird C.P."/>
            <person name="Ainscough R."/>
            <person name="Almeida J.P."/>
            <person name="Ashwell R.I.S."/>
            <person name="Ambrose K.D."/>
            <person name="Babbage A.K."/>
            <person name="Bagguley C.L."/>
            <person name="Bailey J."/>
            <person name="Banerjee R."/>
            <person name="Bates K."/>
            <person name="Beasley H."/>
            <person name="Bray-Allen S."/>
            <person name="Brown A.J."/>
            <person name="Brown J.Y."/>
            <person name="Burford D.C."/>
            <person name="Burrill W."/>
            <person name="Burton J."/>
            <person name="Cahill P."/>
            <person name="Camire D."/>
            <person name="Carter N.P."/>
            <person name="Chapman J.C."/>
            <person name="Clark S.Y."/>
            <person name="Clarke G."/>
            <person name="Clee C.M."/>
            <person name="Clegg S."/>
            <person name="Corby N."/>
            <person name="Coulson A."/>
            <person name="Dhami P."/>
            <person name="Dutta I."/>
            <person name="Dunn M."/>
            <person name="Faulkner L."/>
            <person name="Frankish A."/>
            <person name="Frankland J.A."/>
            <person name="Garner P."/>
            <person name="Garnett J."/>
            <person name="Gribble S."/>
            <person name="Griffiths C."/>
            <person name="Grocock R."/>
            <person name="Gustafson E."/>
            <person name="Hammond S."/>
            <person name="Harley J.L."/>
            <person name="Hart E."/>
            <person name="Heath P.D."/>
            <person name="Ho T.P."/>
            <person name="Hopkins B."/>
            <person name="Horne J."/>
            <person name="Howden P.J."/>
            <person name="Huckle E."/>
            <person name="Hynds C."/>
            <person name="Johnson C."/>
            <person name="Johnson D."/>
            <person name="Kana A."/>
            <person name="Kay M."/>
            <person name="Kimberley A.M."/>
            <person name="Kershaw J.K."/>
            <person name="Kokkinaki M."/>
            <person name="Laird G.K."/>
            <person name="Lawlor S."/>
            <person name="Lee H.M."/>
            <person name="Leongamornlert D.A."/>
            <person name="Laird G."/>
            <person name="Lloyd C."/>
            <person name="Lloyd D.M."/>
            <person name="Loveland J."/>
            <person name="Lovell J."/>
            <person name="McLaren S."/>
            <person name="McLay K.E."/>
            <person name="McMurray A."/>
            <person name="Mashreghi-Mohammadi M."/>
            <person name="Matthews L."/>
            <person name="Milne S."/>
            <person name="Nickerson T."/>
            <person name="Nguyen M."/>
            <person name="Overton-Larty E."/>
            <person name="Palmer S.A."/>
            <person name="Pearce A.V."/>
            <person name="Peck A.I."/>
            <person name="Pelan S."/>
            <person name="Phillimore B."/>
            <person name="Porter K."/>
            <person name="Rice C.M."/>
            <person name="Rogosin A."/>
            <person name="Ross M.T."/>
            <person name="Sarafidou T."/>
            <person name="Sehra H.K."/>
            <person name="Shownkeen R."/>
            <person name="Skuce C.D."/>
            <person name="Smith M."/>
            <person name="Standring L."/>
            <person name="Sycamore N."/>
            <person name="Tester J."/>
            <person name="Thorpe A."/>
            <person name="Torcasso W."/>
            <person name="Tracey A."/>
            <person name="Tromans A."/>
            <person name="Tsolas J."/>
            <person name="Wall M."/>
            <person name="Walsh J."/>
            <person name="Wang H."/>
            <person name="Weinstock K."/>
            <person name="West A.P."/>
            <person name="Willey D.L."/>
            <person name="Whitehead S.L."/>
            <person name="Wilming L."/>
            <person name="Wray P.W."/>
            <person name="Young L."/>
            <person name="Chen Y."/>
            <person name="Lovering R.C."/>
            <person name="Moschonas N.K."/>
            <person name="Siebert R."/>
            <person name="Fechtel K."/>
            <person name="Bentley D."/>
            <person name="Durbin R.M."/>
            <person name="Hubbard T."/>
            <person name="Doucette-Stamm L."/>
            <person name="Beck S."/>
            <person name="Smith D.R."/>
            <person name="Rogers J."/>
        </authorList>
    </citation>
    <scope>NUCLEOTIDE SEQUENCE [LARGE SCALE GENOMIC DNA]</scope>
</reference>
<reference key="8">
    <citation type="journal article" date="2004" name="Genome Res.">
        <title>The status, quality, and expansion of the NIH full-length cDNA project: the Mammalian Gene Collection (MGC).</title>
        <authorList>
            <consortium name="The MGC Project Team"/>
        </authorList>
    </citation>
    <scope>NUCLEOTIDE SEQUENCE [LARGE SCALE MRNA] (ISOFORMS 5 AND 22)</scope>
    <source>
        <tissue>Brain</tissue>
        <tissue>Testis</tissue>
        <tissue>Uterus</tissue>
    </source>
</reference>
<reference key="9">
    <citation type="submission" date="2000-05" db="EMBL/GenBank/DDBJ databases">
        <title>Searching for mutations in the human cAMP responsive element modulator (CREM) gene.</title>
        <authorList>
            <person name="Vouk K."/>
            <person name="Lalli E."/>
            <person name="Scherer S.W."/>
            <person name="Sassone-Corsi P."/>
            <person name="Debeljak N."/>
            <person name="Komel R."/>
            <person name="Rozman D."/>
        </authorList>
    </citation>
    <scope>NUCLEOTIDE SEQUENCE [GENOMIC DNA] OF 1-232</scope>
</reference>
<reference key="10">
    <citation type="journal article" date="2002" name="Mol. Hum. Reprod.">
        <title>Novel leader exons of the cyclic adenosine 3',5'-monophosphate response element modulator (CREM) gene, transcribed from promoters P3 and P4, are highly testis-specific in primates.</title>
        <authorList>
            <person name="Gellersen B."/>
            <person name="Kempf R."/>
            <person name="Sandhowe R."/>
            <person name="Weinbauer G.F."/>
            <person name="Behr R."/>
        </authorList>
    </citation>
    <scope>NUCLEOTIDE SEQUENCE [MRNA] OF 1-10 (ISOFORM 10)</scope>
    <scope>ALTERNATIVE SPLICING (ISOFORMS 5; 10; 11 AND 12)</scope>
</reference>
<reference key="11">
    <citation type="journal article" date="1992" name="Nucleic Acids Res.">
        <title>Cyclic AMP response element binding protein CREB and modulator protein CREM are products of distinct genes.</title>
        <authorList>
            <person name="Meyer T.E."/>
            <person name="Habener J.F."/>
        </authorList>
    </citation>
    <scope>NUCLEOTIDE SEQUENCE [MRNA] OF 1-344 (ISOFORM 4)</scope>
    <source>
        <tissue>Placenta</tissue>
    </source>
</reference>
<reference key="12">
    <citation type="journal article" date="2005" name="Mol. Hum. Reprod.">
        <title>Combinations of genetic changes in the human cAMP-responsive element modulator gene: a clue towards understanding some forms of male infertility?</title>
        <authorList>
            <person name="Vouk K."/>
            <person name="Hudler P."/>
            <person name="Strmsnik L."/>
            <person name="Fink M."/>
            <person name="Majdic G."/>
            <person name="Zorn B."/>
            <person name="Lalli E."/>
            <person name="Sassone-Corsi P."/>
            <person name="Debeljak N."/>
            <person name="Komel R."/>
            <person name="Rozman D."/>
        </authorList>
    </citation>
    <scope>NUCLEOTIDE SEQUENCE [GENOMIC DNA] OF 246-345</scope>
    <scope>TISSUE SPECIFICITY</scope>
</reference>
<reference key="13">
    <citation type="journal article" date="1999" name="Mol. Cell. Biol.">
        <title>Human Cdc34 and Rad6B ubiquitin-conjugating enzymes target repressors of cyclic AMP-induced transcription for proteolysis.</title>
        <authorList>
            <person name="Pati D."/>
            <person name="Meistrich M.L."/>
            <person name="Plon S.E."/>
        </authorList>
    </citation>
    <scope>FUNCTION</scope>
    <scope>INTERACTION WITH CDC34</scope>
    <scope>UBIQUITINATION</scope>
</reference>
<reference key="14">
    <citation type="journal article" date="2000" name="Mol. Hum. Reprod.">
        <title>CREM activator and repressor isoforms in human testis: sequence variations and inaccurate splicing during impaired spermatogenesis.</title>
        <authorList>
            <person name="Behr R."/>
            <person name="Weinbauer G.F."/>
        </authorList>
    </citation>
    <scope>ALTERNATIVE SPLICING (ISOFORMS 2; 4; 13; 15; 17 AND 18)</scope>
    <scope>TISSUE SPECIFICITY</scope>
</reference>
<reference key="15">
    <citation type="journal article" date="2003" name="Theriogenology">
        <title>Different CREM-isoform gene expression between equine and human normal and impaired spermatogenesis.</title>
        <authorList>
            <person name="Bloecher S."/>
            <person name="Behr R."/>
            <person name="Weinbauer G.F."/>
            <person name="Bergmann M."/>
            <person name="Steger K."/>
        </authorList>
    </citation>
    <scope>ALTERNATIVE SPLICING (ISOFORMS 5; 12; 14; 16 AND 19)</scope>
    <scope>TISSUE SPECIFICITY</scope>
</reference>
<reference key="16">
    <citation type="journal article" date="2008" name="J. Proteome Res.">
        <title>Combining protein-based IMAC, peptide-based IMAC, and MudPIT for efficient phosphoproteomic analysis.</title>
        <authorList>
            <person name="Cantin G.T."/>
            <person name="Yi W."/>
            <person name="Lu B."/>
            <person name="Park S.K."/>
            <person name="Xu T."/>
            <person name="Lee J.-D."/>
            <person name="Yates J.R. III"/>
        </authorList>
    </citation>
    <scope>PHOSPHORYLATION [LARGE SCALE ANALYSIS] AT SER-271; SER-274 AND SER-277</scope>
    <scope>IDENTIFICATION BY MASS SPECTROMETRY [LARGE SCALE ANALYSIS]</scope>
    <source>
        <tissue>Cervix carcinoma</tissue>
    </source>
</reference>
<reference key="17">
    <citation type="journal article" date="2008" name="Proc. Natl. Acad. Sci. U.S.A.">
        <title>A quantitative atlas of mitotic phosphorylation.</title>
        <authorList>
            <person name="Dephoure N."/>
            <person name="Zhou C."/>
            <person name="Villen J."/>
            <person name="Beausoleil S.A."/>
            <person name="Bakalarski C.E."/>
            <person name="Elledge S.J."/>
            <person name="Gygi S.P."/>
        </authorList>
    </citation>
    <scope>PHOSPHORYLATION [LARGE SCALE ANALYSIS] AT SER-271 AND SER-277</scope>
    <scope>IDENTIFICATION BY MASS SPECTROMETRY [LARGE SCALE ANALYSIS]</scope>
    <source>
        <tissue>Cervix carcinoma</tissue>
    </source>
</reference>
<reference key="18">
    <citation type="journal article" date="2010" name="Sci. Signal.">
        <title>Quantitative phosphoproteomics reveals widespread full phosphorylation site occupancy during mitosis.</title>
        <authorList>
            <person name="Olsen J.V."/>
            <person name="Vermeulen M."/>
            <person name="Santamaria A."/>
            <person name="Kumar C."/>
            <person name="Miller M.L."/>
            <person name="Jensen L.J."/>
            <person name="Gnad F."/>
            <person name="Cox J."/>
            <person name="Jensen T.S."/>
            <person name="Nigg E.A."/>
            <person name="Brunak S."/>
            <person name="Mann M."/>
        </authorList>
    </citation>
    <scope>IDENTIFICATION BY MASS SPECTROMETRY [LARGE SCALE ANALYSIS]</scope>
    <source>
        <tissue>Cervix carcinoma</tissue>
    </source>
</reference>
<reference key="19">
    <citation type="journal article" date="2013" name="J. Proteome Res.">
        <title>Toward a comprehensive characterization of a human cancer cell phosphoproteome.</title>
        <authorList>
            <person name="Zhou H."/>
            <person name="Di Palma S."/>
            <person name="Preisinger C."/>
            <person name="Peng M."/>
            <person name="Polat A.N."/>
            <person name="Heck A.J."/>
            <person name="Mohammed S."/>
        </authorList>
    </citation>
    <scope>PHOSPHORYLATION [LARGE SCALE ANALYSIS] AT SER-129</scope>
    <scope>IDENTIFICATION BY MASS SPECTROMETRY [LARGE SCALE ANALYSIS]</scope>
    <source>
        <tissue>Cervix carcinoma</tissue>
        <tissue>Erythroleukemia</tissue>
    </source>
</reference>
<keyword id="KW-0010">Activator</keyword>
<keyword id="KW-0877">Alternative promoter usage</keyword>
<keyword id="KW-0025">Alternative splicing</keyword>
<keyword id="KW-0090">Biological rhythms</keyword>
<keyword id="KW-0963">Cytoplasm</keyword>
<keyword id="KW-0217">Developmental protein</keyword>
<keyword id="KW-0221">Differentiation</keyword>
<keyword id="KW-0238">DNA-binding</keyword>
<keyword id="KW-0539">Nucleus</keyword>
<keyword id="KW-0597">Phosphoprotein</keyword>
<keyword id="KW-1267">Proteomics identification</keyword>
<keyword id="KW-1185">Reference proteome</keyword>
<keyword id="KW-0678">Repressor</keyword>
<keyword id="KW-0744">Spermatogenesis</keyword>
<keyword id="KW-0804">Transcription</keyword>
<keyword id="KW-0805">Transcription regulation</keyword>
<keyword id="KW-0832">Ubl conjugation</keyword>
<accession>Q03060</accession>
<accession>A8K014</accession>
<accession>A8K3J7</accession>
<accession>A8K6A1</accession>
<accession>A8MPQ2</accession>
<accession>B4DXC1</accession>
<accession>C9J785</accession>
<accession>C9JZ10</accession>
<accession>E9PAR4</accession>
<accession>E9PHM1</accession>
<accession>O75519</accession>
<accession>Q14501</accession>
<accession>Q14503</accession>
<accession>Q14504</accession>
<accession>Q14505</accession>
<accession>Q14506</accession>
<accession>Q15731</accession>
<accession>Q16114</accession>
<accession>Q16116</accession>
<accession>Q5T9H7</accession>
<accession>Q5W1A6</accession>
<accession>Q5W1A7</accession>
<accession>Q5W1A8</accession>
<accession>Q5W1A9</accession>
<accession>Q5W1B0</accession>
<accession>Q5W1B2</accession>
<accession>Q7Z2Q6</accession>
<accession>Q8IVD4</accession>
<accession>Q96AG7</accession>
<accession>Q9NZ98</accession>
<accession>Q9NZ99</accession>
<accession>Q9NZB9</accession>
<comment type="function">
    <text evidence="6">Transcriptional regulator that binds the cAMP response element (CRE), a sequence present in many viral and cellular promoters. Isoforms are either transcriptional activators or repressors. Plays a role in spermatogenesis and is involved in spermatid maturation (PubMed:10373550).</text>
</comment>
<comment type="function">
    <molecule>Isoform 6</molecule>
    <text evidence="1">May play a role in the regulation of the circadian clock: acts as a transcriptional repressor of the core circadian component PER1 by directly binding to cAMP response elements in its promoter.</text>
</comment>
<comment type="subunit">
    <text evidence="1 2 6">Binds DNA as a dimer. Interacts with FHL5 (By similarity). Interacts with CDC34 (PubMed:10373550). May interact with TSSK4 (By similarity).</text>
</comment>
<comment type="interaction">
    <interactant intactId="EBI-3907794">
        <id>Q03060</id>
    </interactant>
    <interactant intactId="EBI-923653">
        <id>Q9Y6K1</id>
        <label>DNMT3A</label>
    </interactant>
    <organismsDiffer>false</organismsDiffer>
    <experiments>2</experiments>
</comment>
<comment type="interaction">
    <interactant intactId="EBI-12884642">
        <id>Q03060-25</id>
    </interactant>
    <interactant intactId="EBI-10988864">
        <id>P46379-2</id>
        <label>BAG6</label>
    </interactant>
    <organismsDiffer>false</organismsDiffer>
    <experiments>3</experiments>
</comment>
<comment type="interaction">
    <interactant intactId="EBI-12884642">
        <id>Q03060-25</id>
    </interactant>
    <interactant intactId="EBI-711810">
        <id>O14503</id>
        <label>BHLHE40</label>
    </interactant>
    <organismsDiffer>false</organismsDiffer>
    <experiments>3</experiments>
</comment>
<comment type="interaction">
    <interactant intactId="EBI-12884642">
        <id>Q03060-25</id>
    </interactant>
    <interactant intactId="EBI-348399">
        <id>P22607</id>
        <label>FGFR3</label>
    </interactant>
    <organismsDiffer>false</organismsDiffer>
    <experiments>3</experiments>
</comment>
<comment type="interaction">
    <interactant intactId="EBI-12884642">
        <id>Q03060-25</id>
    </interactant>
    <interactant intactId="EBI-7251368">
        <id>Q9BZE0</id>
        <label>GLIS2</label>
    </interactant>
    <organismsDiffer>false</organismsDiffer>
    <experiments>3</experiments>
</comment>
<comment type="interaction">
    <interactant intactId="EBI-12884642">
        <id>Q03060-25</id>
    </interactant>
    <interactant intactId="EBI-12197079">
        <id>P84074</id>
        <label>HPCA</label>
    </interactant>
    <organismsDiffer>false</organismsDiffer>
    <experiments>6</experiments>
</comment>
<comment type="interaction">
    <interactant intactId="EBI-12884642">
        <id>Q03060-25</id>
    </interactant>
    <interactant intactId="EBI-749311">
        <id>P37235</id>
        <label>HPCAL1</label>
    </interactant>
    <organismsDiffer>false</organismsDiffer>
    <experiments>6</experiments>
</comment>
<comment type="interaction">
    <interactant intactId="EBI-12884642">
        <id>Q03060-25</id>
    </interactant>
    <interactant intactId="EBI-73837">
        <id>Q9BUB5</id>
        <label>MKNK1</label>
    </interactant>
    <organismsDiffer>false</organismsDiffer>
    <experiments>3</experiments>
</comment>
<comment type="interaction">
    <interactant intactId="EBI-12884642">
        <id>Q03060-25</id>
    </interactant>
    <interactant intactId="EBI-5662487">
        <id>Q8TDC0</id>
        <label>MYOZ3</label>
    </interactant>
    <organismsDiffer>false</organismsDiffer>
    <experiments>3</experiments>
</comment>
<comment type="interaction">
    <interactant intactId="EBI-12884642">
        <id>Q03060-25</id>
    </interactant>
    <interactant intactId="EBI-749635">
        <id>P61601</id>
        <label>NCALD</label>
    </interactant>
    <organismsDiffer>false</organismsDiffer>
    <experiments>5</experiments>
</comment>
<comment type="interaction">
    <interactant intactId="EBI-12884642">
        <id>Q03060-25</id>
    </interactant>
    <interactant intactId="EBI-746987">
        <id>P62166</id>
        <label>NCS1</label>
    </interactant>
    <organismsDiffer>false</organismsDiffer>
    <experiments>3</experiments>
</comment>
<comment type="interaction">
    <interactant intactId="EBI-12884642">
        <id>Q03060-25</id>
    </interactant>
    <interactant intactId="EBI-11526590">
        <id>P14859-6</id>
        <label>POU2F1</label>
    </interactant>
    <organismsDiffer>false</organismsDiffer>
    <experiments>3</experiments>
</comment>
<comment type="interaction">
    <interactant intactId="EBI-12884642">
        <id>Q03060-25</id>
    </interactant>
    <interactant intactId="EBI-372094">
        <id>Q9BQY4</id>
        <label>RHOXF2</label>
    </interactant>
    <organismsDiffer>false</organismsDiffer>
    <experiments>3</experiments>
</comment>
<comment type="interaction">
    <interactant intactId="EBI-12884642">
        <id>Q03060-25</id>
    </interactant>
    <interactant intactId="EBI-6422642">
        <id>Q01974</id>
        <label>ROR2</label>
    </interactant>
    <organismsDiffer>false</organismsDiffer>
    <experiments>3</experiments>
</comment>
<comment type="interaction">
    <interactant intactId="EBI-12884642">
        <id>Q03060-25</id>
    </interactant>
    <interactant intactId="EBI-6257312">
        <id>Q9BVN2</id>
        <label>RUSC1</label>
    </interactant>
    <organismsDiffer>false</organismsDiffer>
    <experiments>3</experiments>
</comment>
<comment type="interaction">
    <interactant intactId="EBI-12884642">
        <id>Q03060-25</id>
    </interactant>
    <interactant intactId="EBI-372475">
        <id>P14678-2</id>
        <label>SNRPB</label>
    </interactant>
    <organismsDiffer>false</organismsDiffer>
    <experiments>3</experiments>
</comment>
<comment type="interaction">
    <interactant intactId="EBI-12884642">
        <id>Q03060-25</id>
    </interactant>
    <interactant intactId="EBI-766589">
        <id>P09234</id>
        <label>SNRPC</label>
    </interactant>
    <organismsDiffer>false</organismsDiffer>
    <experiments>3</experiments>
</comment>
<comment type="interaction">
    <interactant intactId="EBI-12884642">
        <id>Q03060-25</id>
    </interactant>
    <interactant intactId="EBI-2514383">
        <id>Q5T6F2</id>
        <label>UBAP2</label>
    </interactant>
    <organismsDiffer>false</organismsDiffer>
    <experiments>3</experiments>
</comment>
<comment type="interaction">
    <interactant intactId="EBI-12884642">
        <id>Q03060-25</id>
    </interactant>
    <interactant intactId="EBI-10191303">
        <id>O95231</id>
        <label>VENTX</label>
    </interactant>
    <organismsDiffer>false</organismsDiffer>
    <experiments>3</experiments>
</comment>
<comment type="subcellular location">
    <subcellularLocation>
        <location>Nucleus</location>
    </subcellularLocation>
</comment>
<comment type="subcellular location">
    <molecule>Isoform 6</molecule>
    <subcellularLocation>
        <location evidence="1">Cytoplasm</location>
    </subcellularLocation>
    <subcellularLocation>
        <location evidence="1">Nucleus</location>
    </subcellularLocation>
</comment>
<comment type="alternative products">
    <event type="alternative promoter"/>
    <event type="alternative splicing"/>
    <isoform>
        <id>Q03060-5</id>
        <name>1</name>
        <name>CREM-BCEFGgammaHIbeta</name>
        <sequence type="displayed"/>
    </isoform>
    <isoform>
        <id>Q03060-1</id>
        <name>2</name>
        <name>Beta</name>
        <name>CREM-BCEFGHIbeta</name>
        <sequence type="described" ref="VSP_059705 VSP_059715"/>
    </isoform>
    <isoform>
        <id>Q03060-6</id>
        <name>3</name>
        <name>CREM-BCEFGIalpha</name>
        <name>Tau</name>
        <sequence type="described" ref="VSP_059705 VSP_059715 VSP_059717"/>
    </isoform>
    <isoform>
        <id>Q03060-2</id>
        <name>4</name>
        <name>Alpha</name>
        <name>CREM-BEFHIb</name>
        <name>CREM-gamma</name>
        <sequence type="described" ref="VSP_059705 VSP_059708 VSP_059709"/>
    </isoform>
    <isoform>
        <id>Q03060-7</id>
        <name>5</name>
        <name>CREM-theta2tau-gamma</name>
        <name>CREM-theta2EFGHIb</name>
        <sequence type="described" ref="VSP_059704 VSP_059715"/>
    </isoform>
    <isoform>
        <id>Q03060-8</id>
        <name>6</name>
        <name>CREM2alpha-a</name>
        <name>IcergammaHIalpha</name>
        <name>ICER1</name>
        <name>ICERI</name>
        <sequence type="described" ref="VSP_059701 VSP_059717"/>
    </isoform>
    <isoform>
        <id>Q03060-9</id>
        <name>7</name>
        <name>CREM2alpha-b</name>
        <name>IcerHIalpha</name>
        <name>ICERIgamma</name>
        <sequence type="described" ref="VSP_059698 VSP_059717"/>
    </isoform>
    <isoform>
        <id>Q03060-10</id>
        <name>8</name>
        <name>CREM 2beta-a</name>
        <name>IcergammaHIbeta</name>
        <name>ICERII</name>
        <sequence type="described" ref="VSP_059701"/>
    </isoform>
    <isoform>
        <id>Q03060-11</id>
        <name>9</name>
        <name>CREM 2beta-b</name>
        <name>IcerHIbeta</name>
        <name>ICERIIgamma</name>
        <sequence type="described" ref="VSP_059698"/>
    </isoform>
    <isoform>
        <id>Q03060-12</id>
        <name>10</name>
        <name>CREMtheta1tau2beta</name>
        <name>CREM-theta1EFGHIbeta</name>
        <sequence type="described" ref="VSP_059703 VSP_059715"/>
    </isoform>
    <isoform>
        <id>Q03060-13</id>
        <name>11</name>
        <name>CREM-theta1beta</name>
        <name>CREM-theta1EFHIbeta</name>
        <sequence type="described" ref="VSP_059703 VSP_059712 VSP_059716"/>
    </isoform>
    <isoform>
        <id>Q03060-14</id>
        <name>12</name>
        <name>CREM-theta2beta</name>
        <name>CREM-theta2EFHIb</name>
        <name>CREM-theta2-gamma</name>
        <sequence type="described" ref="VSP_059704 VSP_059712 VSP_059716"/>
    </isoform>
    <isoform>
        <id>Q03060-15</id>
        <name>13</name>
        <name>CREM-BEFGgammaHIbeta</name>
        <sequence type="described" ref="VSP_059705 VSP_059708"/>
    </isoform>
    <isoform>
        <id>Q03060-16</id>
        <name>14</name>
        <name>CREM-tau2-gamma</name>
        <name>CREM-BEFGHIbeta</name>
        <sequence type="described" ref="VSP_059705 VSP_059708 VSP_059715"/>
    </isoform>
    <isoform>
        <id>Q03060-17</id>
        <name>15</name>
        <name>CREM-BGHIbeta</name>
        <sequence type="described" ref="VSP_059705 VSP_059707 VSP_059715"/>
    </isoform>
    <isoform>
        <id>Q03060-19</id>
        <name>16</name>
        <name>CREM-deltaC-G</name>
        <name>CREM-BgammaHIbeta</name>
        <sequence type="described" ref="VSP_059705 VSP_059706"/>
    </isoform>
    <isoform>
        <id>Q03060-20</id>
        <name>17</name>
        <name>CREM-BHIbeta</name>
        <sequence type="described" ref="VSP_059705 VSP_059710"/>
    </isoform>
    <isoform>
        <id>Q03060-21</id>
        <name>18</name>
        <name>CREM-BHIalpha</name>
        <sequence type="described" ref="VSP_059705 VSP_059710 VSP_059717"/>
    </isoform>
    <isoform>
        <id>Q03060-22</id>
        <name>19</name>
        <name>CREM-theta1tau2gamma</name>
        <name>CREM-theta1EFGgammaHIbeta</name>
        <sequence type="described" ref="VSP_059703"/>
    </isoform>
    <isoform>
        <id>Q03060-23</id>
        <name>20</name>
        <sequence type="described" ref="VSP_059699 VSP_059717"/>
    </isoform>
    <isoform>
        <id>Q03060-24</id>
        <name>21</name>
        <sequence type="described" ref="VSP_059697 VSP_059717"/>
    </isoform>
    <isoform>
        <id>Q03060-25</id>
        <name>22</name>
        <sequence type="described" ref="VSP_059708 VSP_059713 VSP_059714"/>
    </isoform>
    <isoform>
        <id>Q03060-26</id>
        <name>23</name>
        <sequence type="described" ref="VSP_059705 VSP_059708 VSP_059711 VSP_059717"/>
    </isoform>
    <isoform>
        <id>Q03060-27</id>
        <name>24</name>
        <sequence type="described" ref="VSP_059697"/>
    </isoform>
    <isoform>
        <id>Q03060-28</id>
        <name>25</name>
        <sequence type="described" ref="VSP_059702 VSP_059715"/>
    </isoform>
    <isoform>
        <id>Q03060-29</id>
        <name>26</name>
        <sequence type="described" ref="VSP_059700"/>
    </isoform>
    <isoform>
        <id>Q03060-30</id>
        <name>27</name>
        <sequence type="described" ref="VSP_059708 VSP_059709"/>
    </isoform>
    <isoform>
        <id>Q03060-31</id>
        <name>28</name>
        <sequence type="described" ref="VSP_059705 VSP_059708 VSP_059715 VSP_059717"/>
    </isoform>
    <isoform>
        <id>Q03060-32</id>
        <name>29</name>
        <sequence type="described" ref="VSP_059705 VSP_059708 VSP_059709 VSP_059717"/>
    </isoform>
</comment>
<comment type="tissue specificity">
    <text evidence="7 8 9">Expressed in testes (round spermatids) (at protein level). Isoform 14 is the major activator form in testes.</text>
</comment>
<comment type="PTM">
    <text evidence="6">Isoform 9 is ubiquitinated by CDC34 and RAD6B in order to be degraded by the proteasome.</text>
</comment>
<comment type="PTM">
    <text evidence="2 3">Stimulated by phosphorylation. Phosphorylated on Ser-116 by TSSK4 in vitro.</text>
</comment>
<comment type="miscellaneous">
    <molecule>Isoform 1</molecule>
    <text>Produced by alternative promoter usage.</text>
</comment>
<comment type="miscellaneous">
    <molecule>Isoform 2</molecule>
    <text evidence="20">Produced by alternative splicing of isoform 1. Activator.</text>
</comment>
<comment type="miscellaneous">
    <molecule>Isoform 3</molecule>
    <text evidence="20">Produced by alternative splicing of isoform 1. Activator.</text>
</comment>
<comment type="miscellaneous">
    <molecule>Isoform 4</molecule>
    <text evidence="20">Produced by alternative splicing of isoform 1.</text>
</comment>
<comment type="miscellaneous">
    <molecule>Isoform 5</molecule>
    <text evidence="20">Produced by alternative promoter usage. Activator.</text>
</comment>
<comment type="miscellaneous">
    <molecule>Isoform 6</molecule>
    <text evidence="20">Produced by alternative promoter usage. Repressor.</text>
</comment>
<comment type="miscellaneous">
    <molecule>Isoform 7</molecule>
    <text evidence="20">Produced by alternative splicing of isoform 6. Repressor.</text>
</comment>
<comment type="miscellaneous">
    <molecule>Isoform 8</molecule>
    <text evidence="20">Produced by alternative splicing of isoform 6. Repressor.</text>
</comment>
<comment type="miscellaneous">
    <molecule>Isoform 9</molecule>
    <text evidence="20">Produced by alternative splicing of isoform 6. Repressor.</text>
</comment>
<comment type="miscellaneous">
    <molecule>Isoform 10</molecule>
    <text evidence="20">Produced by alternative promoter usage. Activator.</text>
</comment>
<comment type="miscellaneous">
    <molecule>Isoform 11</molecule>
    <text evidence="20">Produced by alternative splicing of isoform 10. Repressor.</text>
</comment>
<comment type="miscellaneous">
    <molecule>Isoform 12</molecule>
    <text evidence="20">Produced by alternative splicing of isoform 5. Repressor.</text>
</comment>
<comment type="miscellaneous">
    <molecule>Isoform 13</molecule>
    <text evidence="20">Produced by alternative splicing of isoform 1. Activator.</text>
</comment>
<comment type="miscellaneous">
    <molecule>Isoform 14</molecule>
    <text evidence="20">Produced by alternative splicing of isoform 1. Activator.</text>
</comment>
<comment type="miscellaneous">
    <molecule>Isoform 15</molecule>
    <text evidence="20">Produced by alternative splicing of isoform 1. Repressor.</text>
</comment>
<comment type="miscellaneous">
    <molecule>Isoform 16</molecule>
    <text evidence="20">Produced by alternative splicing of isoform 1. Repressor.</text>
</comment>
<comment type="miscellaneous">
    <molecule>Isoform 17</molecule>
    <text evidence="20">Produced by alternative splicing of isoform 1. Repressor.</text>
</comment>
<comment type="miscellaneous">
    <molecule>Isoform 18</molecule>
    <text evidence="20">Produced by alternative splicing of isoform 1. Repressor.</text>
</comment>
<comment type="miscellaneous">
    <molecule>Isoform 19</molecule>
    <text evidence="20">Produced by alternative splicing of isoform 10. Activator.</text>
</comment>
<comment type="miscellaneous">
    <molecule>Isoform 24</molecule>
    <text evidence="20">Produced by alternative splicing.</text>
</comment>
<comment type="miscellaneous">
    <molecule>Isoform 25</molecule>
    <text evidence="20">Produced by alternative splicing.</text>
</comment>
<comment type="miscellaneous">
    <molecule>Isoform 26</molecule>
    <text evidence="20">Produced by alternative splicing.</text>
</comment>
<comment type="miscellaneous">
    <molecule>Isoform 27</molecule>
    <text evidence="20">Produced by alternative splicing.</text>
</comment>
<comment type="miscellaneous">
    <molecule>Isoform 28</molecule>
    <text evidence="20">Produced by alternative splicing.</text>
</comment>
<comment type="miscellaneous">
    <molecule>Isoform 29</molecule>
    <text evidence="20">Produced by alternative splicing.</text>
</comment>
<comment type="similarity">
    <text evidence="20">Belongs to the bZIP family.</text>
</comment>
<comment type="sequence caution" evidence="20">
    <conflict type="erroneous termination">
        <sequence resource="EMBL-CDS" id="AAB03751"/>
    </conflict>
    <text>Truncated C-terminus.</text>
</comment>
<comment type="sequence caution" evidence="20">
    <conflict type="erroneous gene model prediction">
        <sequence resource="EMBL-CDS" id="AAF68266"/>
    </conflict>
</comment>
<sequence length="345" mass="37006">MTMETVESQHDGSITASLTESKSAHVQTQTGQNSIPALAQVSVAGSGTRRGSPAVTLVQLPSGQTIHVQGVIQTPQPWVIQSSEIHTVQVAAIAETDESAESEGVIDSHKRREILSRRPSYRKILNELSSDVPGVPKIEEERSEEEGTPPSIATMAVPTSIYQTSTGQYIAIAQGGTIQISNPGSDGVQGLQALTMTNSGAPPPGATIVQYAAQSADGTQQFFVPGSQVVVQDEETELAPSHMAAATGDMPTYQIRAPTAALPQGVVMAASPGSLHSPQQLAEEATRKRELRLMKNREAAKECRRRKKEYVKCLESRVAVLEVQNKKLIEELETLKDICSPKTDY</sequence>
<proteinExistence type="evidence at protein level"/>